<sequence length="958" mass="106917">MEHQNAVKEALNALYHHPDDTVRVHADRWLQNFQGTLDAWQVADNLLHDSSSNLETLIFCSQTLRSKVQRDFEELPPGAFQKLRQSLTTLLKKFHKGPPKVRTQISIAVAALAVHVPAADWGDGGIISWLRDEMHMHPEYVPGFLELLTVLPEETFNYKIAARPDRRRQFEKELTSQMEAALSILSACLKISELKEQVLEAFASWLRLRHGIPGTVLACHPLVHAALSSLNCDPLSEASVNVISELIHHTASPSSGGISAQTPLIQVIVPQILSLQAHLRDSSKDEEDVKAIGRLFADVGDSYVELIATGSDEPMVIVHALLEVTAHPEFDIASMTFNFWHSLQLMLTKRESYSSLGSEASIEVERNRRLHIFQPAYQSLVSLVGFRVQYPEDYQGLSYEDLKEFKQTRYAVADVLIDAALILGGDTTLKILYMKLLEANAQTGNNFQDWRPAEAILFCIWAISNYVSVVEAEVMPQVMALLQNLPQQAQLLQTACLLVGAYSKWLNAAPASVSILPSIIRILMSGMGTSEDCAAAAALAFRHTCDDCRKNLCGYFEDLFNIYCMAINGGGGYKVSAEDSLNLVEALGMVVTELPLDQAKGALEKLCFSAASPLEEAAKEDLEKKHARELTVHIDRFAFLFRYVNHPEAVAAEINKHWAIFRVIFDARPWDMRTMESLCRACKYAVRTSGRYIIDTIGEMLEKIQFHYQQHHQPCFLYLSSEVIKIFGSDPSCAVYLKNLIETLFAHTTCLMTSIKEVTARPDIADDCFLLASRCLRYCPHLFIPSPIFPALVNCAMIGITVQHREACHSILTFLTDIFDLEKSVNEEQFVRIRDNIIIPRGATITRILIASLAGALPSSRLDTVTYSLLALTRTYRLQAVSWAKESVSLIPRTALTETESTKFLQALSDIAYGADVNSLIGQVEELSDVCRRNRTVQELVQAALKPLELNLVTAPVS</sequence>
<accession>Q8GUL2</accession>
<accession>Q9FJI6</accession>
<dbReference type="EMBL" id="AB015469">
    <property type="protein sequence ID" value="BAB11510.1"/>
    <property type="status" value="ALT_SEQ"/>
    <property type="molecule type" value="Genomic_DNA"/>
</dbReference>
<dbReference type="EMBL" id="AB020751">
    <property type="protein sequence ID" value="BAB11510.1"/>
    <property type="status" value="JOINED"/>
    <property type="molecule type" value="Genomic_DNA"/>
</dbReference>
<dbReference type="EMBL" id="CP002688">
    <property type="protein sequence ID" value="AED97629.1"/>
    <property type="molecule type" value="Genomic_DNA"/>
</dbReference>
<dbReference type="EMBL" id="BT002408">
    <property type="protein sequence ID" value="AAO00768.1"/>
    <property type="molecule type" value="mRNA"/>
</dbReference>
<dbReference type="EMBL" id="BT010552">
    <property type="protein sequence ID" value="AAQ65175.1"/>
    <property type="molecule type" value="mRNA"/>
</dbReference>
<dbReference type="EMBL" id="AK229829">
    <property type="protein sequence ID" value="BAF01659.1"/>
    <property type="molecule type" value="mRNA"/>
</dbReference>
<dbReference type="EMBL" id="AK230415">
    <property type="protein sequence ID" value="BAF02213.1"/>
    <property type="molecule type" value="mRNA"/>
</dbReference>
<dbReference type="RefSeq" id="NP_201066.2">
    <property type="nucleotide sequence ID" value="NM_125655.4"/>
</dbReference>
<dbReference type="SMR" id="Q8GUL2"/>
<dbReference type="FunCoup" id="Q8GUL2">
    <property type="interactions" value="4801"/>
</dbReference>
<dbReference type="IntAct" id="Q8GUL2">
    <property type="interactions" value="1"/>
</dbReference>
<dbReference type="STRING" id="3702.Q8GUL2"/>
<dbReference type="PaxDb" id="3702-AT5G62600.1"/>
<dbReference type="ProteomicsDB" id="238265"/>
<dbReference type="EnsemblPlants" id="AT5G62600.1">
    <property type="protein sequence ID" value="AT5G62600.1"/>
    <property type="gene ID" value="AT5G62600"/>
</dbReference>
<dbReference type="GeneID" id="836381"/>
<dbReference type="Gramene" id="AT5G62600.1">
    <property type="protein sequence ID" value="AT5G62600.1"/>
    <property type="gene ID" value="AT5G62600"/>
</dbReference>
<dbReference type="KEGG" id="ath:AT5G62600"/>
<dbReference type="Araport" id="AT5G62600"/>
<dbReference type="TAIR" id="AT5G62600">
    <property type="gene designation" value="MOS14"/>
</dbReference>
<dbReference type="eggNOG" id="KOG2081">
    <property type="taxonomic scope" value="Eukaryota"/>
</dbReference>
<dbReference type="HOGENOM" id="CLU_005996_2_0_1"/>
<dbReference type="InParanoid" id="Q8GUL2"/>
<dbReference type="OMA" id="LECITSW"/>
<dbReference type="PhylomeDB" id="Q8GUL2"/>
<dbReference type="PRO" id="PR:Q8GUL2"/>
<dbReference type="Proteomes" id="UP000006548">
    <property type="component" value="Chromosome 5"/>
</dbReference>
<dbReference type="ExpressionAtlas" id="Q8GUL2">
    <property type="expression patterns" value="baseline and differential"/>
</dbReference>
<dbReference type="GO" id="GO:0005634">
    <property type="term" value="C:nucleus"/>
    <property type="evidence" value="ECO:0000314"/>
    <property type="project" value="TAIR"/>
</dbReference>
<dbReference type="GO" id="GO:0031267">
    <property type="term" value="F:small GTPase binding"/>
    <property type="evidence" value="ECO:0007669"/>
    <property type="project" value="InterPro"/>
</dbReference>
<dbReference type="GO" id="GO:0006606">
    <property type="term" value="P:protein import into nucleus"/>
    <property type="evidence" value="ECO:0000315"/>
    <property type="project" value="TAIR"/>
</dbReference>
<dbReference type="GO" id="GO:0043484">
    <property type="term" value="P:regulation of RNA splicing"/>
    <property type="evidence" value="ECO:0000315"/>
    <property type="project" value="TAIR"/>
</dbReference>
<dbReference type="FunFam" id="1.25.10.10:FF:000246">
    <property type="entry name" value="Transportin MOS14"/>
    <property type="match status" value="1"/>
</dbReference>
<dbReference type="Gene3D" id="1.25.10.10">
    <property type="entry name" value="Leucine-rich Repeat Variant"/>
    <property type="match status" value="1"/>
</dbReference>
<dbReference type="InterPro" id="IPR011989">
    <property type="entry name" value="ARM-like"/>
</dbReference>
<dbReference type="InterPro" id="IPR016024">
    <property type="entry name" value="ARM-type_fold"/>
</dbReference>
<dbReference type="InterPro" id="IPR013598">
    <property type="entry name" value="Exportin-1/Importin-b-like"/>
</dbReference>
<dbReference type="InterPro" id="IPR001494">
    <property type="entry name" value="Importin-beta_N"/>
</dbReference>
<dbReference type="InterPro" id="IPR051345">
    <property type="entry name" value="Importin_beta-like_NTR"/>
</dbReference>
<dbReference type="PANTHER" id="PTHR12363:SF33">
    <property type="entry name" value="IMPORTIN-13"/>
    <property type="match status" value="1"/>
</dbReference>
<dbReference type="PANTHER" id="PTHR12363">
    <property type="entry name" value="TRANSPORTIN 3 AND IMPORTIN 13"/>
    <property type="match status" value="1"/>
</dbReference>
<dbReference type="Pfam" id="PF03810">
    <property type="entry name" value="IBN_N"/>
    <property type="match status" value="1"/>
</dbReference>
<dbReference type="Pfam" id="PF24138">
    <property type="entry name" value="TPR_TNPO3_IPO13_2nd"/>
    <property type="match status" value="1"/>
</dbReference>
<dbReference type="Pfam" id="PF24140">
    <property type="entry name" value="TPR_TNPO3_IPO13_3rd"/>
    <property type="match status" value="1"/>
</dbReference>
<dbReference type="Pfam" id="PF24139">
    <property type="entry name" value="TPR_TNPO3_IPO13_4th"/>
    <property type="match status" value="1"/>
</dbReference>
<dbReference type="Pfam" id="PF08389">
    <property type="entry name" value="Xpo1"/>
    <property type="match status" value="1"/>
</dbReference>
<dbReference type="SMART" id="SM00913">
    <property type="entry name" value="IBN_N"/>
    <property type="match status" value="1"/>
</dbReference>
<dbReference type="SUPFAM" id="SSF48371">
    <property type="entry name" value="ARM repeat"/>
    <property type="match status" value="1"/>
</dbReference>
<organism>
    <name type="scientific">Arabidopsis thaliana</name>
    <name type="common">Mouse-ear cress</name>
    <dbReference type="NCBI Taxonomy" id="3702"/>
    <lineage>
        <taxon>Eukaryota</taxon>
        <taxon>Viridiplantae</taxon>
        <taxon>Streptophyta</taxon>
        <taxon>Embryophyta</taxon>
        <taxon>Tracheophyta</taxon>
        <taxon>Spermatophyta</taxon>
        <taxon>Magnoliopsida</taxon>
        <taxon>eudicotyledons</taxon>
        <taxon>Gunneridae</taxon>
        <taxon>Pentapetalae</taxon>
        <taxon>rosids</taxon>
        <taxon>malvids</taxon>
        <taxon>Brassicales</taxon>
        <taxon>Brassicaceae</taxon>
        <taxon>Camelineae</taxon>
        <taxon>Arabidopsis</taxon>
    </lineage>
</organism>
<comment type="function">
    <text evidence="2">Functions as a nuclear import receptor for serine-arginine rich (SR) proteins. Regulates nuclear import of SR proteins that are required for proper splicing of the two resistance (R) genes SNC1 and RPS4, a crucial step for their functions in plant immunity.</text>
</comment>
<comment type="subunit">
    <text evidence="2">Interacts with RS2Z33, RSZ21, RS31A, SR34 and RAN1.</text>
</comment>
<comment type="interaction">
    <interactant intactId="EBI-25520322">
        <id>Q8GUL2</id>
    </interactant>
    <interactant intactId="EBI-4426557">
        <id>Q84MB2</id>
        <label>TIFY8</label>
    </interactant>
    <organismsDiffer>false</organismsDiffer>
    <experiments>3</experiments>
</comment>
<comment type="subcellular location">
    <subcellularLocation>
        <location evidence="2">Nucleus</location>
    </subcellularLocation>
</comment>
<comment type="disruption phenotype">
    <text evidence="2">Semi-dwarf phenotype.</text>
</comment>
<comment type="similarity">
    <text evidence="4">Belongs to the importin beta family.</text>
</comment>
<comment type="sequence caution" evidence="4">
    <conflict type="erroneous gene model prediction">
        <sequence resource="EMBL-CDS" id="BAB11510"/>
    </conflict>
</comment>
<keyword id="KW-0539">Nucleus</keyword>
<keyword id="KW-0653">Protein transport</keyword>
<keyword id="KW-1185">Reference proteome</keyword>
<keyword id="KW-0813">Transport</keyword>
<gene>
    <name evidence="3" type="primary">MOS14</name>
    <name evidence="5" type="ordered locus">At5g62600</name>
    <name evidence="6" type="ORF">K19B1.21</name>
</gene>
<name>MOS14_ARATH</name>
<protein>
    <recommendedName>
        <fullName evidence="4">Transportin MOS14</fullName>
    </recommendedName>
    <alternativeName>
        <fullName evidence="4">Importin beta MOS14</fullName>
    </alternativeName>
    <alternativeName>
        <fullName evidence="3">Protein MODIFIER OF SNC1 14</fullName>
    </alternativeName>
    <alternativeName>
        <fullName evidence="3">Transportin-SR</fullName>
        <shortName evidence="3">TRN-SR</shortName>
    </alternativeName>
</protein>
<proteinExistence type="evidence at protein level"/>
<evidence type="ECO:0000255" key="1">
    <source>
        <dbReference type="PROSITE-ProRule" id="PRU00115"/>
    </source>
</evidence>
<evidence type="ECO:0000269" key="2">
    <source>
    </source>
</evidence>
<evidence type="ECO:0000303" key="3">
    <source>
    </source>
</evidence>
<evidence type="ECO:0000305" key="4"/>
<evidence type="ECO:0000312" key="5">
    <source>
        <dbReference type="Araport" id="AT5G62600"/>
    </source>
</evidence>
<evidence type="ECO:0000312" key="6">
    <source>
        <dbReference type="EMBL" id="BAB11510.1"/>
    </source>
</evidence>
<feature type="chain" id="PRO_0000436558" description="Transportin MOS14">
    <location>
        <begin position="1"/>
        <end position="958"/>
    </location>
</feature>
<feature type="domain" description="Importin N-terminal" evidence="1">
    <location>
        <begin position="26"/>
        <end position="93"/>
    </location>
</feature>
<reference key="1">
    <citation type="journal article" date="1998" name="DNA Res.">
        <title>Structural analysis of Arabidopsis thaliana chromosome 5. VII. Sequence features of the regions of 1,013,767 bp covered by sixteen physically assigned P1 and TAC clones.</title>
        <authorList>
            <person name="Nakamura Y."/>
            <person name="Sato S."/>
            <person name="Asamizu E."/>
            <person name="Kaneko T."/>
            <person name="Kotani H."/>
            <person name="Miyajima N."/>
            <person name="Tabata S."/>
        </authorList>
    </citation>
    <scope>NUCLEOTIDE SEQUENCE [LARGE SCALE GENOMIC DNA]</scope>
    <source>
        <strain>cv. Columbia</strain>
    </source>
</reference>
<reference key="2">
    <citation type="journal article" date="2000" name="DNA Res.">
        <title>Structural analysis of Arabidopsis thaliana chromosome 5. X. Sequence features of the regions of 3,076,755 bp covered by sixty P1 and TAC clones.</title>
        <authorList>
            <person name="Sato S."/>
            <person name="Nakamura Y."/>
            <person name="Kaneko T."/>
            <person name="Katoh T."/>
            <person name="Asamizu E."/>
            <person name="Kotani H."/>
            <person name="Tabata S."/>
        </authorList>
    </citation>
    <scope>NUCLEOTIDE SEQUENCE [LARGE SCALE GENOMIC DNA]</scope>
    <source>
        <strain>cv. Columbia</strain>
    </source>
</reference>
<reference key="3">
    <citation type="journal article" date="2017" name="Plant J.">
        <title>Araport11: a complete reannotation of the Arabidopsis thaliana reference genome.</title>
        <authorList>
            <person name="Cheng C.Y."/>
            <person name="Krishnakumar V."/>
            <person name="Chan A.P."/>
            <person name="Thibaud-Nissen F."/>
            <person name="Schobel S."/>
            <person name="Town C.D."/>
        </authorList>
    </citation>
    <scope>GENOME REANNOTATION</scope>
    <source>
        <strain>cv. Columbia</strain>
    </source>
</reference>
<reference key="4">
    <citation type="journal article" date="2003" name="Science">
        <title>Empirical analysis of transcriptional activity in the Arabidopsis genome.</title>
        <authorList>
            <person name="Yamada K."/>
            <person name="Lim J."/>
            <person name="Dale J.M."/>
            <person name="Chen H."/>
            <person name="Shinn P."/>
            <person name="Palm C.J."/>
            <person name="Southwick A.M."/>
            <person name="Wu H.C."/>
            <person name="Kim C.J."/>
            <person name="Nguyen M."/>
            <person name="Pham P.K."/>
            <person name="Cheuk R.F."/>
            <person name="Karlin-Newmann G."/>
            <person name="Liu S.X."/>
            <person name="Lam B."/>
            <person name="Sakano H."/>
            <person name="Wu T."/>
            <person name="Yu G."/>
            <person name="Miranda M."/>
            <person name="Quach H.L."/>
            <person name="Tripp M."/>
            <person name="Chang C.H."/>
            <person name="Lee J.M."/>
            <person name="Toriumi M.J."/>
            <person name="Chan M.M."/>
            <person name="Tang C.C."/>
            <person name="Onodera C.S."/>
            <person name="Deng J.M."/>
            <person name="Akiyama K."/>
            <person name="Ansari Y."/>
            <person name="Arakawa T."/>
            <person name="Banh J."/>
            <person name="Banno F."/>
            <person name="Bowser L."/>
            <person name="Brooks S.Y."/>
            <person name="Carninci P."/>
            <person name="Chao Q."/>
            <person name="Choy N."/>
            <person name="Enju A."/>
            <person name="Goldsmith A.D."/>
            <person name="Gurjal M."/>
            <person name="Hansen N.F."/>
            <person name="Hayashizaki Y."/>
            <person name="Johnson-Hopson C."/>
            <person name="Hsuan V.W."/>
            <person name="Iida K."/>
            <person name="Karnes M."/>
            <person name="Khan S."/>
            <person name="Koesema E."/>
            <person name="Ishida J."/>
            <person name="Jiang P.X."/>
            <person name="Jones T."/>
            <person name="Kawai J."/>
            <person name="Kamiya A."/>
            <person name="Meyers C."/>
            <person name="Nakajima M."/>
            <person name="Narusaka M."/>
            <person name="Seki M."/>
            <person name="Sakurai T."/>
            <person name="Satou M."/>
            <person name="Tamse R."/>
            <person name="Vaysberg M."/>
            <person name="Wallender E.K."/>
            <person name="Wong C."/>
            <person name="Yamamura Y."/>
            <person name="Yuan S."/>
            <person name="Shinozaki K."/>
            <person name="Davis R.W."/>
            <person name="Theologis A."/>
            <person name="Ecker J.R."/>
        </authorList>
    </citation>
    <scope>NUCLEOTIDE SEQUENCE [LARGE SCALE MRNA]</scope>
    <source>
        <strain>cv. Columbia</strain>
    </source>
</reference>
<reference key="5">
    <citation type="submission" date="2006-07" db="EMBL/GenBank/DDBJ databases">
        <title>Large-scale analysis of RIKEN Arabidopsis full-length (RAFL) cDNAs.</title>
        <authorList>
            <person name="Totoki Y."/>
            <person name="Seki M."/>
            <person name="Ishida J."/>
            <person name="Nakajima M."/>
            <person name="Enju A."/>
            <person name="Kamiya A."/>
            <person name="Narusaka M."/>
            <person name="Shin-i T."/>
            <person name="Nakagawa M."/>
            <person name="Sakamoto N."/>
            <person name="Oishi K."/>
            <person name="Kohara Y."/>
            <person name="Kobayashi M."/>
            <person name="Toyoda A."/>
            <person name="Sakaki Y."/>
            <person name="Sakurai T."/>
            <person name="Iida K."/>
            <person name="Akiyama K."/>
            <person name="Satou M."/>
            <person name="Toyoda T."/>
            <person name="Konagaya A."/>
            <person name="Carninci P."/>
            <person name="Kawai J."/>
            <person name="Hayashizaki Y."/>
            <person name="Shinozaki K."/>
        </authorList>
    </citation>
    <scope>NUCLEOTIDE SEQUENCE [LARGE SCALE MRNA]</scope>
    <source>
        <strain>cv. Columbia</strain>
    </source>
</reference>
<reference key="6">
    <citation type="journal article" date="2011" name="PLoS Genet.">
        <title>Transportin-SR is required for proper splicing of resistance genes and plant immunity.</title>
        <authorList>
            <person name="Xu S."/>
            <person name="Zhang Z."/>
            <person name="Jing B."/>
            <person name="Gannon P."/>
            <person name="Ding J."/>
            <person name="Xu F."/>
            <person name="Li X."/>
            <person name="Zhang Y."/>
        </authorList>
    </citation>
    <scope>FUNCTION</scope>
    <scope>INTERACTION WITH RS2Z33; RSZ21; RS31A; SR34 AND RAN1</scope>
    <scope>SUBCELLULAR LOCATION</scope>
    <scope>DISRUPTION PHENOTYPE</scope>
</reference>